<feature type="chain" id="PRO_1000055284" description="Large ribosomal subunit protein uL6">
    <location>
        <begin position="1"/>
        <end position="179"/>
    </location>
</feature>
<accession>A2BYS2</accession>
<keyword id="KW-0687">Ribonucleoprotein</keyword>
<keyword id="KW-0689">Ribosomal protein</keyword>
<keyword id="KW-0694">RNA-binding</keyword>
<keyword id="KW-0699">rRNA-binding</keyword>
<comment type="function">
    <text evidence="1">This protein binds to the 23S rRNA, and is important in its secondary structure. It is located near the subunit interface in the base of the L7/L12 stalk, and near the tRNA binding site of the peptidyltransferase center.</text>
</comment>
<comment type="subunit">
    <text evidence="1">Part of the 50S ribosomal subunit.</text>
</comment>
<comment type="similarity">
    <text evidence="1">Belongs to the universal ribosomal protein uL6 family.</text>
</comment>
<proteinExistence type="inferred from homology"/>
<organism>
    <name type="scientific">Prochlorococcus marinus (strain MIT 9515)</name>
    <dbReference type="NCBI Taxonomy" id="167542"/>
    <lineage>
        <taxon>Bacteria</taxon>
        <taxon>Bacillati</taxon>
        <taxon>Cyanobacteriota</taxon>
        <taxon>Cyanophyceae</taxon>
        <taxon>Synechococcales</taxon>
        <taxon>Prochlorococcaceae</taxon>
        <taxon>Prochlorococcus</taxon>
    </lineage>
</organism>
<gene>
    <name evidence="1" type="primary">rplF</name>
    <name evidence="1" type="synonym">rpl6</name>
    <name type="ordered locus">P9515_17261</name>
</gene>
<protein>
    <recommendedName>
        <fullName evidence="1">Large ribosomal subunit protein uL6</fullName>
    </recommendedName>
    <alternativeName>
        <fullName evidence="2">50S ribosomal protein L6</fullName>
    </alternativeName>
</protein>
<reference key="1">
    <citation type="journal article" date="2007" name="PLoS Genet.">
        <title>Patterns and implications of gene gain and loss in the evolution of Prochlorococcus.</title>
        <authorList>
            <person name="Kettler G.C."/>
            <person name="Martiny A.C."/>
            <person name="Huang K."/>
            <person name="Zucker J."/>
            <person name="Coleman M.L."/>
            <person name="Rodrigue S."/>
            <person name="Chen F."/>
            <person name="Lapidus A."/>
            <person name="Ferriera S."/>
            <person name="Johnson J."/>
            <person name="Steglich C."/>
            <person name="Church G.M."/>
            <person name="Richardson P."/>
            <person name="Chisholm S.W."/>
        </authorList>
    </citation>
    <scope>NUCLEOTIDE SEQUENCE [LARGE SCALE GENOMIC DNA]</scope>
    <source>
        <strain>MIT 9515</strain>
    </source>
</reference>
<name>RL6_PROM5</name>
<evidence type="ECO:0000255" key="1">
    <source>
        <dbReference type="HAMAP-Rule" id="MF_01365"/>
    </source>
</evidence>
<evidence type="ECO:0000305" key="2"/>
<dbReference type="EMBL" id="CP000552">
    <property type="protein sequence ID" value="ABM72933.1"/>
    <property type="molecule type" value="Genomic_DNA"/>
</dbReference>
<dbReference type="RefSeq" id="WP_011821024.1">
    <property type="nucleotide sequence ID" value="NC_008817.1"/>
</dbReference>
<dbReference type="SMR" id="A2BYS2"/>
<dbReference type="STRING" id="167542.P9515_17261"/>
<dbReference type="GeneID" id="60200548"/>
<dbReference type="KEGG" id="pmc:P9515_17261"/>
<dbReference type="eggNOG" id="COG0097">
    <property type="taxonomic scope" value="Bacteria"/>
</dbReference>
<dbReference type="HOGENOM" id="CLU_065464_1_2_3"/>
<dbReference type="OrthoDB" id="9805007at2"/>
<dbReference type="Proteomes" id="UP000001589">
    <property type="component" value="Chromosome"/>
</dbReference>
<dbReference type="GO" id="GO:0022625">
    <property type="term" value="C:cytosolic large ribosomal subunit"/>
    <property type="evidence" value="ECO:0007669"/>
    <property type="project" value="TreeGrafter"/>
</dbReference>
<dbReference type="GO" id="GO:0019843">
    <property type="term" value="F:rRNA binding"/>
    <property type="evidence" value="ECO:0007669"/>
    <property type="project" value="UniProtKB-UniRule"/>
</dbReference>
<dbReference type="GO" id="GO:0003735">
    <property type="term" value="F:structural constituent of ribosome"/>
    <property type="evidence" value="ECO:0007669"/>
    <property type="project" value="InterPro"/>
</dbReference>
<dbReference type="GO" id="GO:0002181">
    <property type="term" value="P:cytoplasmic translation"/>
    <property type="evidence" value="ECO:0007669"/>
    <property type="project" value="TreeGrafter"/>
</dbReference>
<dbReference type="FunFam" id="3.90.930.12:FF:000001">
    <property type="entry name" value="50S ribosomal protein L6"/>
    <property type="match status" value="1"/>
</dbReference>
<dbReference type="FunFam" id="3.90.930.12:FF:000002">
    <property type="entry name" value="50S ribosomal protein L6"/>
    <property type="match status" value="1"/>
</dbReference>
<dbReference type="Gene3D" id="3.90.930.12">
    <property type="entry name" value="Ribosomal protein L6, alpha-beta domain"/>
    <property type="match status" value="2"/>
</dbReference>
<dbReference type="HAMAP" id="MF_01365_B">
    <property type="entry name" value="Ribosomal_uL6_B"/>
    <property type="match status" value="1"/>
</dbReference>
<dbReference type="InterPro" id="IPR000702">
    <property type="entry name" value="Ribosomal_uL6-like"/>
</dbReference>
<dbReference type="InterPro" id="IPR036789">
    <property type="entry name" value="Ribosomal_uL6-like_a/b-dom_sf"/>
</dbReference>
<dbReference type="InterPro" id="IPR020040">
    <property type="entry name" value="Ribosomal_uL6_a/b-dom"/>
</dbReference>
<dbReference type="InterPro" id="IPR019906">
    <property type="entry name" value="Ribosomal_uL6_bac-type"/>
</dbReference>
<dbReference type="InterPro" id="IPR002358">
    <property type="entry name" value="Ribosomal_uL6_CS"/>
</dbReference>
<dbReference type="NCBIfam" id="TIGR03654">
    <property type="entry name" value="L6_bact"/>
    <property type="match status" value="1"/>
</dbReference>
<dbReference type="PANTHER" id="PTHR11655">
    <property type="entry name" value="60S/50S RIBOSOMAL PROTEIN L6/L9"/>
    <property type="match status" value="1"/>
</dbReference>
<dbReference type="PANTHER" id="PTHR11655:SF14">
    <property type="entry name" value="LARGE RIBOSOMAL SUBUNIT PROTEIN UL6M"/>
    <property type="match status" value="1"/>
</dbReference>
<dbReference type="Pfam" id="PF00347">
    <property type="entry name" value="Ribosomal_L6"/>
    <property type="match status" value="2"/>
</dbReference>
<dbReference type="PIRSF" id="PIRSF002162">
    <property type="entry name" value="Ribosomal_L6"/>
    <property type="match status" value="1"/>
</dbReference>
<dbReference type="PRINTS" id="PR00059">
    <property type="entry name" value="RIBOSOMALL6"/>
</dbReference>
<dbReference type="SUPFAM" id="SSF56053">
    <property type="entry name" value="Ribosomal protein L6"/>
    <property type="match status" value="2"/>
</dbReference>
<dbReference type="PROSITE" id="PS00525">
    <property type="entry name" value="RIBOSOMAL_L6_1"/>
    <property type="match status" value="1"/>
</dbReference>
<sequence>MSRIGKSPVQIPDKVSVDINGLTITVKGPKGELKRLMPEGVDFVQKENQIVVTPSTTKRYSRERHGLCRTLISNMVQGVTDGYSKKLEIVGVGSRAQVKGKTLVVSAGYSHPVEMTPPDGITYKVESNTNVTVSGIDKEIVGNEAAKIRSIRPPEPYKGKGIKYQDERIIRKAGKSGKK</sequence>